<accession>F9X9V2</accession>
<keyword id="KW-0012">Acyltransferase</keyword>
<keyword id="KW-1185">Reference proteome</keyword>
<keyword id="KW-0808">Transferase</keyword>
<keyword id="KW-0843">Virulence</keyword>
<name>FER5_ZYMTI</name>
<feature type="chain" id="PRO_0000451094" description="Acyltransferase MYCGRDRAFT_85486">
    <location>
        <begin position="1"/>
        <end position="414"/>
    </location>
</feature>
<feature type="region of interest" description="Disordered" evidence="6">
    <location>
        <begin position="16"/>
        <end position="47"/>
    </location>
</feature>
<feature type="compositionally biased region" description="Polar residues" evidence="6">
    <location>
        <begin position="16"/>
        <end position="25"/>
    </location>
</feature>
<feature type="active site" description="Proton acceptor" evidence="5">
    <location>
        <position position="367"/>
    </location>
</feature>
<feature type="binding site" evidence="5">
    <location>
        <position position="329"/>
    </location>
    <ligand>
        <name>substrate</name>
    </ligand>
</feature>
<gene>
    <name type="ORF">MYCGRDRAFT_85486</name>
</gene>
<evidence type="ECO:0000250" key="1">
    <source>
        <dbReference type="UniProtKB" id="Q4P3F1"/>
    </source>
</evidence>
<evidence type="ECO:0000250" key="2">
    <source>
        <dbReference type="UniProtKB" id="Q4PEM9"/>
    </source>
</evidence>
<evidence type="ECO:0000250" key="3">
    <source>
        <dbReference type="UniProtKB" id="Q4PEN0"/>
    </source>
</evidence>
<evidence type="ECO:0000250" key="4">
    <source>
        <dbReference type="UniProtKB" id="Q4PEN1"/>
    </source>
</evidence>
<evidence type="ECO:0000255" key="5"/>
<evidence type="ECO:0000256" key="6">
    <source>
        <dbReference type="SAM" id="MobiDB-lite"/>
    </source>
</evidence>
<evidence type="ECO:0000303" key="7">
    <source>
    </source>
</evidence>
<evidence type="ECO:0000305" key="8"/>
<evidence type="ECO:0000305" key="9">
    <source>
    </source>
</evidence>
<protein>
    <recommendedName>
        <fullName evidence="7">Acyltransferase MYCGRDRAFT_85486</fullName>
        <ecNumber evidence="4">2.3.-.-</ecNumber>
    </recommendedName>
    <alternativeName>
        <fullName evidence="7">Ferrichrome A-like siderophore biosynthesis protein MYCGRDRAFT_85486</fullName>
    </alternativeName>
</protein>
<dbReference type="EC" id="2.3.-.-" evidence="4"/>
<dbReference type="EMBL" id="CM001199">
    <property type="protein sequence ID" value="EGP87766.1"/>
    <property type="molecule type" value="Genomic_DNA"/>
</dbReference>
<dbReference type="RefSeq" id="XP_003852790.1">
    <property type="nucleotide sequence ID" value="XM_003852742.1"/>
</dbReference>
<dbReference type="SMR" id="F9X9V2"/>
<dbReference type="STRING" id="336722.F9X9V2"/>
<dbReference type="EnsemblFungi" id="Mycgr3T85486">
    <property type="protein sequence ID" value="Mycgr3P85486"/>
    <property type="gene ID" value="Mycgr3G85486"/>
</dbReference>
<dbReference type="GeneID" id="13400881"/>
<dbReference type="KEGG" id="ztr:MYCGRDRAFT_85486"/>
<dbReference type="eggNOG" id="ENOG502RZMI">
    <property type="taxonomic scope" value="Eukaryota"/>
</dbReference>
<dbReference type="HOGENOM" id="CLU_039848_7_0_1"/>
<dbReference type="InParanoid" id="F9X9V2"/>
<dbReference type="OMA" id="GQIWNVI"/>
<dbReference type="OrthoDB" id="4250781at2759"/>
<dbReference type="Proteomes" id="UP000008062">
    <property type="component" value="Chromosome 4"/>
</dbReference>
<dbReference type="GO" id="GO:0016410">
    <property type="term" value="F:N-acyltransferase activity"/>
    <property type="evidence" value="ECO:0007669"/>
    <property type="project" value="TreeGrafter"/>
</dbReference>
<dbReference type="GO" id="GO:0019290">
    <property type="term" value="P:siderophore biosynthetic process"/>
    <property type="evidence" value="ECO:0007669"/>
    <property type="project" value="InterPro"/>
</dbReference>
<dbReference type="Gene3D" id="3.40.630.30">
    <property type="match status" value="1"/>
</dbReference>
<dbReference type="InterPro" id="IPR016181">
    <property type="entry name" value="Acyl_CoA_acyltransferase"/>
</dbReference>
<dbReference type="InterPro" id="IPR019432">
    <property type="entry name" value="Acyltransferase_MbtK/IucB-like"/>
</dbReference>
<dbReference type="PANTHER" id="PTHR31438">
    <property type="entry name" value="LYSINE N-ACYLTRANSFERASE C17G9.06C-RELATED"/>
    <property type="match status" value="1"/>
</dbReference>
<dbReference type="PANTHER" id="PTHR31438:SF1">
    <property type="entry name" value="LYSINE N-ACYLTRANSFERASE C17G9.06C-RELATED"/>
    <property type="match status" value="1"/>
</dbReference>
<dbReference type="Pfam" id="PF13523">
    <property type="entry name" value="Acetyltransf_8"/>
    <property type="match status" value="1"/>
</dbReference>
<dbReference type="SMART" id="SM01006">
    <property type="entry name" value="AlcB"/>
    <property type="match status" value="1"/>
</dbReference>
<dbReference type="SUPFAM" id="SSF55729">
    <property type="entry name" value="Acyl-CoA N-acyltransferases (Nat)"/>
    <property type="match status" value="1"/>
</dbReference>
<sequence>MTTTTTTTALTFTLPDGTSTVTIRPTQKAAPSEEPSQDTAPSKKDSNHEVYLNDHLIATWVIDPSVKTRVSPAQVLDERAEFDSVRHLVLSSRRSNDNGHTWISIYALWLLHHDLDVIPISSPSNSAVTTYLINTGLAAPSPFEPADTDAGRTLLLAREAFWQGAGTPDNLSWLRSRPEASIPGFNSHLGAFASQMSFTRRGNVCTTHPLRPQKPAPGTVVYSRYIVEVGQHLQLVHIDASNPVHFSAYARWQNSDRVNHGWRERGPDEKHAAYLESQRIDPHTMSLIFLWDGEPAGYSEVGWAKEDNTACFVSSNCGIHIGEFDQLSHILVGEEKFRGGKRYQAVATSIKHLCFLRDPRTTQVIAEPRFDLPSVPIQARFLPQERKKRVQLPHKQAVLFALQRERFFQEGHFY</sequence>
<comment type="function">
    <text evidence="1 2 3 4 9">Acyltransferase; part of the gene cluster 14 that mediates the biosynthesis of a ferrichrome A-like siderophore which may contribute to organismal virulence (Probable). The first step of siderophore biosynthesis is performed by the HMG-CoA synthase (HMGS) MYCGRDRAFT_54740 which catalyzes the generation of HMG-CoA and CoA using acetoacetyl-CoA and acetyl-CoA as substrates (By similarity). The enoyl-CoA isomerase/hydratase MYCGRDRAFT_76805 then catalyzes the conversion of HMG-CoA to methylglutaconyl-CoA (By similarity). The acyltransferase MYCGRDRAFT_85486 then fuses methylglutaconyl-CoA with hydroxyornithine to yield methylglutaconyl hydroxyornithine (By similarity). Methylglutaconyl hydroxyornithine is then available for use by the nonribosomal peptide synthetase NRPS2 to generate the ferrichrome A-like siderophore (By similarity).</text>
</comment>
<comment type="pathway">
    <text evidence="9">Siderophore biosynthesis.</text>
</comment>
<comment type="similarity">
    <text evidence="8">Belongs to the lysine N-acyltransferase mbtK family.</text>
</comment>
<reference key="1">
    <citation type="journal article" date="2011" name="PLoS Genet.">
        <title>Finished genome of the fungal wheat pathogen Mycosphaerella graminicola reveals dispensome structure, chromosome plasticity, and stealth pathogenesis.</title>
        <authorList>
            <person name="Goodwin S.B."/>
            <person name="Ben M'barek S."/>
            <person name="Dhillon B."/>
            <person name="Wittenberg A.H.J."/>
            <person name="Crane C.F."/>
            <person name="Hane J.K."/>
            <person name="Foster A.J."/>
            <person name="Van der Lee T.A.J."/>
            <person name="Grimwood J."/>
            <person name="Aerts A."/>
            <person name="Antoniw J."/>
            <person name="Bailey A."/>
            <person name="Bluhm B."/>
            <person name="Bowler J."/>
            <person name="Bristow J."/>
            <person name="van der Burgt A."/>
            <person name="Canto-Canche B."/>
            <person name="Churchill A.C.L."/>
            <person name="Conde-Ferraez L."/>
            <person name="Cools H.J."/>
            <person name="Coutinho P.M."/>
            <person name="Csukai M."/>
            <person name="Dehal P."/>
            <person name="De Wit P."/>
            <person name="Donzelli B."/>
            <person name="van de Geest H.C."/>
            <person name="van Ham R.C.H.J."/>
            <person name="Hammond-Kosack K.E."/>
            <person name="Henrissat B."/>
            <person name="Kilian A."/>
            <person name="Kobayashi A.K."/>
            <person name="Koopmann E."/>
            <person name="Kourmpetis Y."/>
            <person name="Kuzniar A."/>
            <person name="Lindquist E."/>
            <person name="Lombard V."/>
            <person name="Maliepaard C."/>
            <person name="Martins N."/>
            <person name="Mehrabi R."/>
            <person name="Nap J.P.H."/>
            <person name="Ponomarenko A."/>
            <person name="Rudd J.J."/>
            <person name="Salamov A."/>
            <person name="Schmutz J."/>
            <person name="Schouten H.J."/>
            <person name="Shapiro H."/>
            <person name="Stergiopoulos I."/>
            <person name="Torriani S.F.F."/>
            <person name="Tu H."/>
            <person name="de Vries R.P."/>
            <person name="Waalwijk C."/>
            <person name="Ware S.B."/>
            <person name="Wiebenga A."/>
            <person name="Zwiers L.-H."/>
            <person name="Oliver R.P."/>
            <person name="Grigoriev I.V."/>
            <person name="Kema G.H.J."/>
        </authorList>
    </citation>
    <scope>NUCLEOTIDE SEQUENCE [LARGE SCALE GENOMIC DNA]</scope>
    <source>
        <strain>CBS 115943 / IPO323</strain>
    </source>
</reference>
<reference key="2">
    <citation type="journal article" date="2017" name="BMC Genomics">
        <title>In silico prediction and characterization of secondary metabolite biosynthetic gene clusters in the wheat pathogen Zymoseptoria tritici.</title>
        <authorList>
            <person name="Cairns T."/>
            <person name="Meyer V."/>
        </authorList>
    </citation>
    <scope>FUNCTION</scope>
    <scope>PATHWAY</scope>
</reference>
<proteinExistence type="inferred from homology"/>
<organism>
    <name type="scientific">Zymoseptoria tritici (strain CBS 115943 / IPO323)</name>
    <name type="common">Speckled leaf blotch fungus</name>
    <name type="synonym">Septoria tritici</name>
    <dbReference type="NCBI Taxonomy" id="336722"/>
    <lineage>
        <taxon>Eukaryota</taxon>
        <taxon>Fungi</taxon>
        <taxon>Dikarya</taxon>
        <taxon>Ascomycota</taxon>
        <taxon>Pezizomycotina</taxon>
        <taxon>Dothideomycetes</taxon>
        <taxon>Dothideomycetidae</taxon>
        <taxon>Mycosphaerellales</taxon>
        <taxon>Mycosphaerellaceae</taxon>
        <taxon>Zymoseptoria</taxon>
    </lineage>
</organism>